<name>Y3007_MYCPA</name>
<proteinExistence type="inferred from homology"/>
<gene>
    <name type="ordered locus">MAP_3007</name>
</gene>
<protein>
    <recommendedName>
        <fullName evidence="1">Aldo-keto reductase MAP_3007</fullName>
        <ecNumber evidence="1">1.1.1.-</ecNumber>
    </recommendedName>
</protein>
<accession>Q73VK6</accession>
<feature type="chain" id="PRO_0000380738" description="Aldo-keto reductase MAP_3007">
    <location>
        <begin position="1"/>
        <end position="281"/>
    </location>
</feature>
<feature type="active site" description="Proton donor" evidence="2">
    <location>
        <position position="56"/>
    </location>
</feature>
<feature type="binding site" evidence="1">
    <location>
        <position position="196"/>
    </location>
    <ligand>
        <name>NADPH</name>
        <dbReference type="ChEBI" id="CHEBI:57783"/>
    </ligand>
</feature>
<feature type="binding site" evidence="1">
    <location>
        <position position="234"/>
    </location>
    <ligand>
        <name>NADPH</name>
        <dbReference type="ChEBI" id="CHEBI:57783"/>
    </ligand>
</feature>
<feature type="binding site" evidence="1">
    <location>
        <position position="236"/>
    </location>
    <ligand>
        <name>NADPH</name>
        <dbReference type="ChEBI" id="CHEBI:57783"/>
    </ligand>
</feature>
<feature type="binding site" evidence="1">
    <location>
        <position position="237"/>
    </location>
    <ligand>
        <name>NADPH</name>
        <dbReference type="ChEBI" id="CHEBI:57783"/>
    </ligand>
</feature>
<feature type="binding site" evidence="1">
    <location>
        <position position="238"/>
    </location>
    <ligand>
        <name>NADPH</name>
        <dbReference type="ChEBI" id="CHEBI:57783"/>
    </ligand>
</feature>
<feature type="binding site" evidence="1">
    <location>
        <position position="245"/>
    </location>
    <ligand>
        <name>NADPH</name>
        <dbReference type="ChEBI" id="CHEBI:57783"/>
    </ligand>
</feature>
<feature type="binding site" evidence="1">
    <location>
        <position position="272"/>
    </location>
    <ligand>
        <name>NADPH</name>
        <dbReference type="ChEBI" id="CHEBI:57783"/>
    </ligand>
</feature>
<organism>
    <name type="scientific">Mycolicibacterium paratuberculosis (strain ATCC BAA-968 / K-10)</name>
    <name type="common">Mycobacterium paratuberculosis</name>
    <dbReference type="NCBI Taxonomy" id="262316"/>
    <lineage>
        <taxon>Bacteria</taxon>
        <taxon>Bacillati</taxon>
        <taxon>Actinomycetota</taxon>
        <taxon>Actinomycetes</taxon>
        <taxon>Mycobacteriales</taxon>
        <taxon>Mycobacteriaceae</taxon>
        <taxon>Mycobacterium</taxon>
        <taxon>Mycobacterium avium complex (MAC)</taxon>
    </lineage>
</organism>
<evidence type="ECO:0000250" key="1">
    <source>
        <dbReference type="UniProtKB" id="A0QV09"/>
    </source>
</evidence>
<evidence type="ECO:0000250" key="2">
    <source>
        <dbReference type="UniProtKB" id="P80874"/>
    </source>
</evidence>
<evidence type="ECO:0000305" key="3"/>
<dbReference type="EC" id="1.1.1.-" evidence="1"/>
<dbReference type="EMBL" id="AE016958">
    <property type="protein sequence ID" value="AAS05555.1"/>
    <property type="molecule type" value="Genomic_DNA"/>
</dbReference>
<dbReference type="SMR" id="Q73VK6"/>
<dbReference type="STRING" id="262316.MAP_3007"/>
<dbReference type="KEGG" id="mpa:MAP_3007"/>
<dbReference type="eggNOG" id="COG0656">
    <property type="taxonomic scope" value="Bacteria"/>
</dbReference>
<dbReference type="HOGENOM" id="CLU_023205_0_1_11"/>
<dbReference type="Proteomes" id="UP000000580">
    <property type="component" value="Chromosome"/>
</dbReference>
<dbReference type="GO" id="GO:0004033">
    <property type="term" value="F:aldo-keto reductase (NADPH) activity"/>
    <property type="evidence" value="ECO:0007669"/>
    <property type="project" value="TreeGrafter"/>
</dbReference>
<dbReference type="CDD" id="cd19134">
    <property type="entry name" value="AKR_AKR5H1"/>
    <property type="match status" value="1"/>
</dbReference>
<dbReference type="FunFam" id="3.20.20.100:FF:000002">
    <property type="entry name" value="2,5-diketo-D-gluconic acid reductase A"/>
    <property type="match status" value="1"/>
</dbReference>
<dbReference type="Gene3D" id="3.20.20.100">
    <property type="entry name" value="NADP-dependent oxidoreductase domain"/>
    <property type="match status" value="1"/>
</dbReference>
<dbReference type="InterPro" id="IPR020471">
    <property type="entry name" value="AKR"/>
</dbReference>
<dbReference type="InterPro" id="IPR018170">
    <property type="entry name" value="Aldo/ket_reductase_CS"/>
</dbReference>
<dbReference type="InterPro" id="IPR023210">
    <property type="entry name" value="NADP_OxRdtase_dom"/>
</dbReference>
<dbReference type="InterPro" id="IPR036812">
    <property type="entry name" value="NADP_OxRdtase_dom_sf"/>
</dbReference>
<dbReference type="PANTHER" id="PTHR43827">
    <property type="entry name" value="2,5-DIKETO-D-GLUCONIC ACID REDUCTASE"/>
    <property type="match status" value="1"/>
</dbReference>
<dbReference type="PANTHER" id="PTHR43827:SF3">
    <property type="entry name" value="NADP-DEPENDENT OXIDOREDUCTASE DOMAIN-CONTAINING PROTEIN"/>
    <property type="match status" value="1"/>
</dbReference>
<dbReference type="Pfam" id="PF00248">
    <property type="entry name" value="Aldo_ket_red"/>
    <property type="match status" value="1"/>
</dbReference>
<dbReference type="PIRSF" id="PIRSF000097">
    <property type="entry name" value="AKR"/>
    <property type="match status" value="1"/>
</dbReference>
<dbReference type="PRINTS" id="PR00069">
    <property type="entry name" value="ALDKETRDTASE"/>
</dbReference>
<dbReference type="SUPFAM" id="SSF51430">
    <property type="entry name" value="NAD(P)-linked oxidoreductase"/>
    <property type="match status" value="1"/>
</dbReference>
<dbReference type="PROSITE" id="PS00062">
    <property type="entry name" value="ALDOKETO_REDUCTASE_2"/>
    <property type="match status" value="1"/>
</dbReference>
<reference key="1">
    <citation type="journal article" date="2005" name="Proc. Natl. Acad. Sci. U.S.A.">
        <title>The complete genome sequence of Mycobacterium avium subspecies paratuberculosis.</title>
        <authorList>
            <person name="Li L."/>
            <person name="Bannantine J.P."/>
            <person name="Zhang Q."/>
            <person name="Amonsin A."/>
            <person name="May B.J."/>
            <person name="Alt D."/>
            <person name="Banerji N."/>
            <person name="Kanjilal S."/>
            <person name="Kapur V."/>
        </authorList>
    </citation>
    <scope>NUCLEOTIDE SEQUENCE [LARGE SCALE GENOMIC DNA]</scope>
    <source>
        <strain>ATCC BAA-968 / K-10</strain>
    </source>
</reference>
<comment type="similarity">
    <text evidence="3">Belongs to the aldo/keto reductase family.</text>
</comment>
<keyword id="KW-0521">NADP</keyword>
<keyword id="KW-0560">Oxidoreductase</keyword>
<keyword id="KW-1185">Reference proteome</keyword>
<sequence>MTGESGSAAPSIALNDENTMPVLGLGVAELSDDETERAVSAALEVGCRLIDTAAAYGNEAAVGRAIAASGIPRAELFVTTKLATSDQGFKGAMDACEASLERLGLDYVDLYLIHWPAPALGTYVNSFGGMIQSRGNGHARSIGVSNFTEEYLTTVIDLTFVTPAVNQIELHPLLNQEALRKTNAEHNVVTQSYTPLALGKLNDHPTVNSVAAEYGKTASQVLLRWNLQLSNAVIFRSANAEHIASDFDVFDFELAAEHMDAINALNDGTRLRPDPDTYEGS</sequence>